<dbReference type="EMBL" id="CP000112">
    <property type="protein sequence ID" value="ABB39235.1"/>
    <property type="molecule type" value="Genomic_DNA"/>
</dbReference>
<dbReference type="RefSeq" id="WP_011368304.1">
    <property type="nucleotide sequence ID" value="NC_007519.1"/>
</dbReference>
<dbReference type="SMR" id="Q30YL1"/>
<dbReference type="STRING" id="207559.Dde_2438"/>
<dbReference type="KEGG" id="dde:Dde_2438"/>
<dbReference type="eggNOG" id="COG0781">
    <property type="taxonomic scope" value="Bacteria"/>
</dbReference>
<dbReference type="HOGENOM" id="CLU_087843_3_3_7"/>
<dbReference type="Proteomes" id="UP000002710">
    <property type="component" value="Chromosome"/>
</dbReference>
<dbReference type="GO" id="GO:0005829">
    <property type="term" value="C:cytosol"/>
    <property type="evidence" value="ECO:0007669"/>
    <property type="project" value="TreeGrafter"/>
</dbReference>
<dbReference type="GO" id="GO:0003723">
    <property type="term" value="F:RNA binding"/>
    <property type="evidence" value="ECO:0007669"/>
    <property type="project" value="UniProtKB-UniRule"/>
</dbReference>
<dbReference type="GO" id="GO:0006353">
    <property type="term" value="P:DNA-templated transcription termination"/>
    <property type="evidence" value="ECO:0007669"/>
    <property type="project" value="UniProtKB-UniRule"/>
</dbReference>
<dbReference type="GO" id="GO:0031564">
    <property type="term" value="P:transcription antitermination"/>
    <property type="evidence" value="ECO:0007669"/>
    <property type="project" value="UniProtKB-KW"/>
</dbReference>
<dbReference type="Gene3D" id="1.10.940.10">
    <property type="entry name" value="NusB-like"/>
    <property type="match status" value="1"/>
</dbReference>
<dbReference type="HAMAP" id="MF_00073">
    <property type="entry name" value="NusB"/>
    <property type="match status" value="1"/>
</dbReference>
<dbReference type="InterPro" id="IPR035926">
    <property type="entry name" value="NusB-like_sf"/>
</dbReference>
<dbReference type="InterPro" id="IPR011605">
    <property type="entry name" value="NusB_fam"/>
</dbReference>
<dbReference type="InterPro" id="IPR006027">
    <property type="entry name" value="NusB_RsmB_TIM44"/>
</dbReference>
<dbReference type="NCBIfam" id="TIGR01951">
    <property type="entry name" value="nusB"/>
    <property type="match status" value="1"/>
</dbReference>
<dbReference type="PANTHER" id="PTHR11078:SF3">
    <property type="entry name" value="ANTITERMINATION NUSB DOMAIN-CONTAINING PROTEIN"/>
    <property type="match status" value="1"/>
</dbReference>
<dbReference type="PANTHER" id="PTHR11078">
    <property type="entry name" value="N UTILIZATION SUBSTANCE PROTEIN B-RELATED"/>
    <property type="match status" value="1"/>
</dbReference>
<dbReference type="Pfam" id="PF01029">
    <property type="entry name" value="NusB"/>
    <property type="match status" value="1"/>
</dbReference>
<dbReference type="SUPFAM" id="SSF48013">
    <property type="entry name" value="NusB-like"/>
    <property type="match status" value="1"/>
</dbReference>
<protein>
    <recommendedName>
        <fullName evidence="1">Transcription antitermination protein NusB</fullName>
    </recommendedName>
    <alternativeName>
        <fullName evidence="1">Antitermination factor NusB</fullName>
    </alternativeName>
</protein>
<reference key="1">
    <citation type="journal article" date="2011" name="J. Bacteriol.">
        <title>Complete genome sequence and updated annotation of Desulfovibrio alaskensis G20.</title>
        <authorList>
            <person name="Hauser L.J."/>
            <person name="Land M.L."/>
            <person name="Brown S.D."/>
            <person name="Larimer F."/>
            <person name="Keller K.L."/>
            <person name="Rapp-Giles B.J."/>
            <person name="Price M.N."/>
            <person name="Lin M."/>
            <person name="Bruce D.C."/>
            <person name="Detter J.C."/>
            <person name="Tapia R."/>
            <person name="Han C.S."/>
            <person name="Goodwin L.A."/>
            <person name="Cheng J.F."/>
            <person name="Pitluck S."/>
            <person name="Copeland A."/>
            <person name="Lucas S."/>
            <person name="Nolan M."/>
            <person name="Lapidus A.L."/>
            <person name="Palumbo A.V."/>
            <person name="Wall J.D."/>
        </authorList>
    </citation>
    <scope>NUCLEOTIDE SEQUENCE [LARGE SCALE GENOMIC DNA]</scope>
    <source>
        <strain>ATCC BAA-1058 / DSM 17464 / G20</strain>
    </source>
</reference>
<organism>
    <name type="scientific">Oleidesulfovibrio alaskensis (strain ATCC BAA-1058 / DSM 17464 / G20)</name>
    <name type="common">Desulfovibrio alaskensis</name>
    <dbReference type="NCBI Taxonomy" id="207559"/>
    <lineage>
        <taxon>Bacteria</taxon>
        <taxon>Pseudomonadati</taxon>
        <taxon>Thermodesulfobacteriota</taxon>
        <taxon>Desulfovibrionia</taxon>
        <taxon>Desulfovibrionales</taxon>
        <taxon>Desulfovibrionaceae</taxon>
        <taxon>Oleidesulfovibrio</taxon>
    </lineage>
</organism>
<proteinExistence type="inferred from homology"/>
<name>NUSB_OLEA2</name>
<evidence type="ECO:0000255" key="1">
    <source>
        <dbReference type="HAMAP-Rule" id="MF_00073"/>
    </source>
</evidence>
<gene>
    <name evidence="1" type="primary">nusB</name>
    <name type="ordered locus">Dde_2438</name>
</gene>
<feature type="chain" id="PRO_0000265517" description="Transcription antitermination protein NusB">
    <location>
        <begin position="1"/>
        <end position="154"/>
    </location>
</feature>
<comment type="function">
    <text evidence="1">Involved in transcription antitermination. Required for transcription of ribosomal RNA (rRNA) genes. Binds specifically to the boxA antiterminator sequence of the ribosomal RNA (rrn) operons.</text>
</comment>
<comment type="similarity">
    <text evidence="1">Belongs to the NusB family.</text>
</comment>
<sequence>MAAKGNNSSRRSSRALAFQVLYGLNFSPAKDLAQLQEAYCASPDVSDRGGEAHPVGFAWELIEGTWTNQKALDEIITRFAQNWRVERIGKIELTILRLAVYEMLYRADVPPKVAINEGIELSKQFGDDKSRNFINGILDAAAKALEAGTITCKY</sequence>
<accession>Q30YL1</accession>
<keyword id="KW-1185">Reference proteome</keyword>
<keyword id="KW-0694">RNA-binding</keyword>
<keyword id="KW-0804">Transcription</keyword>
<keyword id="KW-0889">Transcription antitermination</keyword>
<keyword id="KW-0805">Transcription regulation</keyword>